<sequence length="1605" mass="173395">MEEHHRRLHVKAERASVIGGDIVDGAFGSWALRAARSEHQLKQQSNEDLAQNARISALLGEMRPRMSAMPPNGHQQQYQPQLRRKANTTNIVDVSSQVPSARNAIYGSWQDRHRPTRLYGSQLVSSSSTLPKYDQLYCNTASPLTGNGSTNTIATTGIRREPPEYGNVGRSVSTWQVTNSEHRPSLQAGWLKSSRPLARGALSPAAYFRDLENRHGSGASSPIVGGLSVVAVPITQRHAPTAGLAPISDDISTSKVSLDTENQQLNNEDSDKISGSALSRNTPRQASFMAAMQRHPLKESSTSIESNGGGTNTEEDQTVSATSKEDPSEDTGHDDPEETQEISETPIRRSRNRNASLRNRQSSRSLGGLDFEKLRMGTARVGDSNEATAENGTSSSSSRKNSRDDGLTSSPTTVAGPVFTTSSTSSISTSGEASSTAVAAAAAGSVAATTSRQTSSNSSVDSNHNEAMKMIRRARPKSYVLATSASMNEDVLSSSIIANEQSSSISHDTTTSGRELPSSLMGSTISMEMRSGGASSATTTTTSNSGQQTSRSLNAPHPPATHRLQRFIALFNSSKTSDGSGEHKKSRMKRSRTSLPASRFALPGTILQRDGVARQTWVKHQEIALGKSGKRNNWEDRWAVLCRRSLYLCVESPAYTTEKTIELGSHTRVDVCNAIVDIAYDWLSSSFSKQRHVVRIVTQNRSEHLIELNTESEMLSWISVLQSSSEDGIATGSSVDENELSTTGRHNNNAVSNSSALLHNSQSIASLASSSCSTATTSEFLNSQHTLQQQQQQQTNQKHQQTVNELSAGIVSHLPTSKSFGGLSTTASSTTENAKNRLIMHRYIAKNSQLQSPTANKKMETDPSTVPSSSQTMATTSSSFHHHSSQAGPSRDIENGEAPTATATTPKSGRKWKKSKAAKQGSGGGSSGSSSGSQQQGAAGAPQPVLGVRIADCPTGSCEDHVPMIVQACVCVIETYGMDTVGIYRIPGNTAAVNALKESLSNRGFDSVDLSKVESLDPRWRDVNVVSSLLKMFLRKLPEPLLTDKLYPFFIDANRISTHHNRLHKLRNLLRKLPRPHYDTLRFLIVHLSEITKHSDVNKMECRNLALMFGPSIVRPSDDNMATMVTHMSDQCKIIETLIHYNLWMFDESSTTEDAVPEQHPADGQNPLEPGGYGVGVPTGVSAASFNDMHNLIRKANEDQAAAMMNEGKGQKIKNMLRRNSRRDKSKSKLKIESTAPAAVNPRGWTQPTPSNTSAASVESAFCGNYQERDIDAEIESRQTVSPQMTSGSADGASSTRLDQSPSLESSLGSLPDTSRTEPILGSSGYDDDEAKEAARRKRQEEMYSARRIFIAGAAGAAAAATTTADAEKAAIDALANHSQHLHLASSPAFEVLSEETREKIRRMQKKQSWHDTKELRSGELLKTYSPTKDLTDALSCTSDYSTTSSAPLSTNPPLAVACADQPNSSSDYASSDPSPCARNPSTSPASRPSNLAISPAQLHATSSSGQSHQPMSRSQKIRLRTKLGSRDPARRHTLSDVDTLKEGRLDKLARWFGIRKSSPDVSRDEVSDDEKNHQEAPPLPAAAPPVIVRTSPNELTPVSGDELL</sequence>
<proteinExistence type="evidence at protein level"/>
<accession>P34288</accession>
<accession>B3VIA5</accession>
<accession>B5MBW1</accession>
<accession>P34414</accession>
<accession>P34588</accession>
<accession>P34589</accession>
<accession>Q8ST20</accession>
<accession>Q9TY64</accession>
<evidence type="ECO:0000250" key="1"/>
<evidence type="ECO:0000255" key="2">
    <source>
        <dbReference type="PROSITE-ProRule" id="PRU00145"/>
    </source>
</evidence>
<evidence type="ECO:0000255" key="3">
    <source>
        <dbReference type="PROSITE-ProRule" id="PRU00172"/>
    </source>
</evidence>
<evidence type="ECO:0000256" key="4">
    <source>
        <dbReference type="SAM" id="MobiDB-lite"/>
    </source>
</evidence>
<evidence type="ECO:0000269" key="5">
    <source>
    </source>
</evidence>
<evidence type="ECO:0000269" key="6">
    <source>
    </source>
</evidence>
<evidence type="ECO:0000269" key="7">
    <source>
    </source>
</evidence>
<evidence type="ECO:0000303" key="8">
    <source>
    </source>
</evidence>
<evidence type="ECO:0000303" key="9">
    <source>
    </source>
</evidence>
<evidence type="ECO:0000305" key="10"/>
<evidence type="ECO:0000312" key="11">
    <source>
        <dbReference type="WormBase" id="C04D8.1a"/>
    </source>
</evidence>
<evidence type="ECO:0000312" key="12">
    <source>
        <dbReference type="WormBase" id="C04D8.1b"/>
    </source>
</evidence>
<name>PAC1_CAEEL</name>
<organism>
    <name type="scientific">Caenorhabditis elegans</name>
    <dbReference type="NCBI Taxonomy" id="6239"/>
    <lineage>
        <taxon>Eukaryota</taxon>
        <taxon>Metazoa</taxon>
        <taxon>Ecdysozoa</taxon>
        <taxon>Nematoda</taxon>
        <taxon>Chromadorea</taxon>
        <taxon>Rhabditida</taxon>
        <taxon>Rhabditina</taxon>
        <taxon>Rhabditomorpha</taxon>
        <taxon>Rhabditoidea</taxon>
        <taxon>Rhabditidae</taxon>
        <taxon>Peloderinae</taxon>
        <taxon>Caenorhabditis</taxon>
    </lineage>
</organism>
<dbReference type="EMBL" id="EU752496">
    <property type="protein sequence ID" value="ACE78177.1"/>
    <property type="molecule type" value="mRNA"/>
</dbReference>
<dbReference type="EMBL" id="FO080326">
    <property type="protein sequence ID" value="CCD62880.1"/>
    <property type="molecule type" value="Genomic_DNA"/>
</dbReference>
<dbReference type="EMBL" id="FO080326">
    <property type="protein sequence ID" value="CCD62881.1"/>
    <property type="molecule type" value="Genomic_DNA"/>
</dbReference>
<dbReference type="EMBL" id="U02289">
    <property type="protein sequence ID" value="AAA18934.1"/>
    <property type="molecule type" value="mRNA"/>
</dbReference>
<dbReference type="PIR" id="S44647">
    <property type="entry name" value="S44647"/>
</dbReference>
<dbReference type="PIR" id="S44746">
    <property type="entry name" value="S44746"/>
</dbReference>
<dbReference type="PIR" id="S44876">
    <property type="entry name" value="S44876"/>
</dbReference>
<dbReference type="PIR" id="S44877">
    <property type="entry name" value="S44877"/>
</dbReference>
<dbReference type="RefSeq" id="NP_001129833.1">
    <molecule id="P34288-2"/>
    <property type="nucleotide sequence ID" value="NM_001136361.5"/>
</dbReference>
<dbReference type="RefSeq" id="NP_498877.4">
    <molecule id="P34288-1"/>
    <property type="nucleotide sequence ID" value="NM_066476.6"/>
</dbReference>
<dbReference type="SMR" id="P34288"/>
<dbReference type="BioGRID" id="41405">
    <property type="interactions" value="21"/>
</dbReference>
<dbReference type="DIP" id="DIP-61635N"/>
<dbReference type="FunCoup" id="P34288">
    <property type="interactions" value="180"/>
</dbReference>
<dbReference type="IntAct" id="P34288">
    <property type="interactions" value="18"/>
</dbReference>
<dbReference type="STRING" id="6239.C04D8.1c.1"/>
<dbReference type="PaxDb" id="6239-C04D8.1c"/>
<dbReference type="EnsemblMetazoa" id="C04D8.1a.1">
    <molecule id="P34288-1"/>
    <property type="protein sequence ID" value="C04D8.1a.1"/>
    <property type="gene ID" value="WBGene00015418"/>
</dbReference>
<dbReference type="EnsemblMetazoa" id="C04D8.1b.1">
    <molecule id="P34288-2"/>
    <property type="protein sequence ID" value="C04D8.1b.1"/>
    <property type="gene ID" value="WBGene00015418"/>
</dbReference>
<dbReference type="GeneID" id="176201"/>
<dbReference type="KEGG" id="cel:CELE_C04D8.1"/>
<dbReference type="AGR" id="WB:WBGene00015418"/>
<dbReference type="CTD" id="176201"/>
<dbReference type="WormBase" id="C04D8.1a">
    <molecule id="P34288-1"/>
    <property type="protein sequence ID" value="CE43148"/>
    <property type="gene ID" value="WBGene00015418"/>
    <property type="gene designation" value="pac-1"/>
</dbReference>
<dbReference type="WormBase" id="C04D8.1b">
    <molecule id="P34288-2"/>
    <property type="protein sequence ID" value="CE42977"/>
    <property type="gene ID" value="WBGene00015418"/>
    <property type="gene designation" value="pac-1"/>
</dbReference>
<dbReference type="eggNOG" id="KOG4407">
    <property type="taxonomic scope" value="Eukaryota"/>
</dbReference>
<dbReference type="InParanoid" id="P34288"/>
<dbReference type="OrthoDB" id="9994905at2759"/>
<dbReference type="Reactome" id="R-CEL-9013148">
    <property type="pathway name" value="CDC42 GTPase cycle"/>
</dbReference>
<dbReference type="Reactome" id="R-CEL-9013149">
    <property type="pathway name" value="RAC1 GTPase cycle"/>
</dbReference>
<dbReference type="Reactome" id="R-CEL-9013405">
    <property type="pathway name" value="RHOD GTPase cycle"/>
</dbReference>
<dbReference type="Reactome" id="R-CEL-9013423">
    <property type="pathway name" value="RAC3 GTPase cycle"/>
</dbReference>
<dbReference type="Reactome" id="R-CEL-9013424">
    <property type="pathway name" value="RHOV GTPase cycle"/>
</dbReference>
<dbReference type="Reactome" id="R-CEL-9035034">
    <property type="pathway name" value="RHOF GTPase cycle"/>
</dbReference>
<dbReference type="PRO" id="PR:P34288"/>
<dbReference type="Proteomes" id="UP000001940">
    <property type="component" value="Chromosome III"/>
</dbReference>
<dbReference type="Bgee" id="WBGene00015418">
    <property type="expression patterns" value="Expressed in pharyngeal muscle cell (C elegans) and 4 other cell types or tissues"/>
</dbReference>
<dbReference type="ExpressionAtlas" id="P34288">
    <property type="expression patterns" value="baseline and differential"/>
</dbReference>
<dbReference type="GO" id="GO:0005912">
    <property type="term" value="C:adherens junction"/>
    <property type="evidence" value="ECO:0007669"/>
    <property type="project" value="UniProtKB-SubCell"/>
</dbReference>
<dbReference type="GO" id="GO:0030054">
    <property type="term" value="C:cell junction"/>
    <property type="evidence" value="ECO:0000314"/>
    <property type="project" value="WormBase"/>
</dbReference>
<dbReference type="GO" id="GO:0005737">
    <property type="term" value="C:cytoplasm"/>
    <property type="evidence" value="ECO:0000318"/>
    <property type="project" value="GO_Central"/>
</dbReference>
<dbReference type="GO" id="GO:0005886">
    <property type="term" value="C:plasma membrane"/>
    <property type="evidence" value="ECO:0000318"/>
    <property type="project" value="GO_Central"/>
</dbReference>
<dbReference type="GO" id="GO:0005096">
    <property type="term" value="F:GTPase activator activity"/>
    <property type="evidence" value="ECO:0000314"/>
    <property type="project" value="UniProtKB"/>
</dbReference>
<dbReference type="GO" id="GO:0008104">
    <property type="term" value="P:protein localization"/>
    <property type="evidence" value="ECO:0000315"/>
    <property type="project" value="WormBase"/>
</dbReference>
<dbReference type="GO" id="GO:0007265">
    <property type="term" value="P:Ras protein signal transduction"/>
    <property type="evidence" value="ECO:0000314"/>
    <property type="project" value="UniProtKB"/>
</dbReference>
<dbReference type="GO" id="GO:0010470">
    <property type="term" value="P:regulation of gastrulation"/>
    <property type="evidence" value="ECO:0000315"/>
    <property type="project" value="WormBase"/>
</dbReference>
<dbReference type="GO" id="GO:0007266">
    <property type="term" value="P:Rho protein signal transduction"/>
    <property type="evidence" value="ECO:0000314"/>
    <property type="project" value="UniProtKB"/>
</dbReference>
<dbReference type="GO" id="GO:0007264">
    <property type="term" value="P:small GTPase-mediated signal transduction"/>
    <property type="evidence" value="ECO:0000318"/>
    <property type="project" value="GO_Central"/>
</dbReference>
<dbReference type="CDD" id="cd01253">
    <property type="entry name" value="PH_ARHGAP21-like"/>
    <property type="match status" value="1"/>
</dbReference>
<dbReference type="CDD" id="cd04395">
    <property type="entry name" value="RhoGAP_ARHGAP21"/>
    <property type="match status" value="1"/>
</dbReference>
<dbReference type="FunFam" id="1.10.555.10:FF:000058">
    <property type="entry name" value="GTPase-activating protein pac-1"/>
    <property type="match status" value="1"/>
</dbReference>
<dbReference type="Gene3D" id="2.30.29.30">
    <property type="entry name" value="Pleckstrin-homology domain (PH domain)/Phosphotyrosine-binding domain (PTB)"/>
    <property type="match status" value="1"/>
</dbReference>
<dbReference type="Gene3D" id="1.10.555.10">
    <property type="entry name" value="Rho GTPase activation protein"/>
    <property type="match status" value="1"/>
</dbReference>
<dbReference type="InterPro" id="IPR011993">
    <property type="entry name" value="PH-like_dom_sf"/>
</dbReference>
<dbReference type="InterPro" id="IPR001849">
    <property type="entry name" value="PH_domain"/>
</dbReference>
<dbReference type="InterPro" id="IPR050729">
    <property type="entry name" value="Rho-GAP"/>
</dbReference>
<dbReference type="InterPro" id="IPR008936">
    <property type="entry name" value="Rho_GTPase_activation_prot"/>
</dbReference>
<dbReference type="InterPro" id="IPR000198">
    <property type="entry name" value="RhoGAP_dom"/>
</dbReference>
<dbReference type="PANTHER" id="PTHR23176:SF133">
    <property type="entry name" value="GTPASE-ACTIVATING PROTEIN PAC-1"/>
    <property type="match status" value="1"/>
</dbReference>
<dbReference type="PANTHER" id="PTHR23176">
    <property type="entry name" value="RHO/RAC/CDC GTPASE-ACTIVATING PROTEIN"/>
    <property type="match status" value="1"/>
</dbReference>
<dbReference type="Pfam" id="PF00169">
    <property type="entry name" value="PH"/>
    <property type="match status" value="1"/>
</dbReference>
<dbReference type="Pfam" id="PF00620">
    <property type="entry name" value="RhoGAP"/>
    <property type="match status" value="1"/>
</dbReference>
<dbReference type="SMART" id="SM00233">
    <property type="entry name" value="PH"/>
    <property type="match status" value="1"/>
</dbReference>
<dbReference type="SMART" id="SM00324">
    <property type="entry name" value="RhoGAP"/>
    <property type="match status" value="1"/>
</dbReference>
<dbReference type="SUPFAM" id="SSF48350">
    <property type="entry name" value="GTPase activation domain, GAP"/>
    <property type="match status" value="1"/>
</dbReference>
<dbReference type="SUPFAM" id="SSF50729">
    <property type="entry name" value="PH domain-like"/>
    <property type="match status" value="1"/>
</dbReference>
<dbReference type="PROSITE" id="PS50003">
    <property type="entry name" value="PH_DOMAIN"/>
    <property type="match status" value="1"/>
</dbReference>
<dbReference type="PROSITE" id="PS50238">
    <property type="entry name" value="RHOGAP"/>
    <property type="match status" value="1"/>
</dbReference>
<reference key="1">
    <citation type="journal article" date="2008" name="Science">
        <title>Polarization of the C. elegans embryo by RhoGAP-mediated exclusion of PAR-6 from cell contacts.</title>
        <authorList>
            <person name="Anderson D.C."/>
            <person name="Gill J.S."/>
            <person name="Cinalli R.M."/>
            <person name="Nance J."/>
        </authorList>
    </citation>
    <scope>NUCLEOTIDE SEQUENCE [MRNA] (ISOFORM B)</scope>
    <scope>FUNCTION</scope>
    <scope>SUBCELLULAR LOCATION</scope>
    <scope>MUTAGENESIS OF ARG-985</scope>
</reference>
<reference key="2">
    <citation type="journal article" date="1994" name="Nature">
        <title>2.2 Mb of contiguous nucleotide sequence from chromosome III of C. elegans.</title>
        <authorList>
            <person name="Wilson R."/>
            <person name="Ainscough R."/>
            <person name="Anderson K."/>
            <person name="Baynes C."/>
            <person name="Berks M."/>
            <person name="Bonfield J."/>
            <person name="Burton J."/>
            <person name="Connell M."/>
            <person name="Copsey T."/>
            <person name="Cooper J."/>
            <person name="Coulson A."/>
            <person name="Craxton M."/>
            <person name="Dear S."/>
            <person name="Du Z."/>
            <person name="Durbin R."/>
            <person name="Favello A."/>
            <person name="Fraser A."/>
            <person name="Fulton L."/>
            <person name="Gardner A."/>
            <person name="Green P."/>
            <person name="Hawkins T."/>
            <person name="Hillier L."/>
            <person name="Jier M."/>
            <person name="Johnston L."/>
            <person name="Jones M."/>
            <person name="Kershaw J."/>
            <person name="Kirsten J."/>
            <person name="Laisster N."/>
            <person name="Latreille P."/>
            <person name="Lightning J."/>
            <person name="Lloyd C."/>
            <person name="Mortimore B."/>
            <person name="O'Callaghan M."/>
            <person name="Parsons J."/>
            <person name="Percy C."/>
            <person name="Rifken L."/>
            <person name="Roopra A."/>
            <person name="Saunders D."/>
            <person name="Shownkeen R."/>
            <person name="Sims M."/>
            <person name="Smaldon N."/>
            <person name="Smith A."/>
            <person name="Smith M."/>
            <person name="Sonnhammer E."/>
            <person name="Staden R."/>
            <person name="Sulston J."/>
            <person name="Thierry-Mieg J."/>
            <person name="Thomas K."/>
            <person name="Vaudin M."/>
            <person name="Vaughan K."/>
            <person name="Waterston R."/>
            <person name="Watson A."/>
            <person name="Weinstock L."/>
            <person name="Wilkinson-Sproat J."/>
            <person name="Wohldman P."/>
        </authorList>
    </citation>
    <scope>NUCLEOTIDE SEQUENCE [LARGE SCALE GENOMIC DNA]</scope>
    <source>
        <strain>Bristol N2</strain>
    </source>
</reference>
<reference key="3">
    <citation type="journal article" date="1998" name="Science">
        <title>Genome sequence of the nematode C. elegans: a platform for investigating biology.</title>
        <authorList>
            <consortium name="The C. elegans sequencing consortium"/>
        </authorList>
    </citation>
    <scope>NUCLEOTIDE SEQUENCE [LARGE SCALE GENOMIC DNA]</scope>
    <source>
        <strain>Bristol N2</strain>
    </source>
</reference>
<reference key="4">
    <citation type="journal article" date="1994" name="J. Biol. Chem.">
        <title>Characterization of a promiscuous GTPase-activating protein that has a bcr-related domain from Caenorhabditis elegans.</title>
        <authorList>
            <person name="Chen W."/>
            <person name="Blanc J."/>
            <person name="Lim L."/>
        </authorList>
    </citation>
    <scope>NUCLEOTIDE SEQUENCE [MRNA] OF 167-1605 (ISOFORM A)</scope>
    <scope>FUNCTION</scope>
    <source>
        <strain>Bristol N2</strain>
    </source>
</reference>
<reference key="5">
    <citation type="journal article" date="2015" name="Nat. Cell Biol.">
        <title>An instructive role for C. elegans E-cadherin in translating cell contact cues into cortical polarity.</title>
        <authorList>
            <person name="Klompstra D."/>
            <person name="Anderson D.C."/>
            <person name="Yeh J.Y."/>
            <person name="Zilberman Y."/>
            <person name="Nance J."/>
        </authorList>
    </citation>
    <scope>FUNCTION</scope>
    <scope>ASSOCIATION WITH THE CATENIN-CADHERIN COMPLEX</scope>
    <scope>INTERACTION WITH PICC-1</scope>
    <scope>SUBCELLULAR LOCATION</scope>
    <scope>DEVELOPMENTAL STAGE</scope>
    <scope>DISRUPTION PHENOTYPE</scope>
</reference>
<keyword id="KW-0025">Alternative splicing</keyword>
<keyword id="KW-0965">Cell junction</keyword>
<keyword id="KW-0963">Cytoplasm</keyword>
<keyword id="KW-0343">GTPase activation</keyword>
<keyword id="KW-1185">Reference proteome</keyword>
<gene>
    <name type="primary">pac-1</name>
    <name type="synonym">gap</name>
    <name type="ORF">C04D8.1</name>
</gene>
<protein>
    <recommendedName>
        <fullName>GTPase-activating protein pac-1</fullName>
    </recommendedName>
    <alternativeName>
        <fullName>GTPase-activating protein GAP</fullName>
        <shortName>CeGAP</shortName>
    </alternativeName>
    <alternativeName>
        <fullName>Protein par-6-at-contacts</fullName>
    </alternativeName>
</protein>
<feature type="chain" id="PRO_0000056659" description="GTPase-activating protein pac-1">
    <location>
        <begin position="1"/>
        <end position="1605"/>
    </location>
</feature>
<feature type="domain" description="PH" evidence="2">
    <location>
        <begin position="599"/>
        <end position="726"/>
    </location>
</feature>
<feature type="domain" description="Rho-GAP" evidence="3">
    <location>
        <begin position="948"/>
        <end position="1146"/>
    </location>
</feature>
<feature type="region of interest" description="Required for localization to adherens junctions" evidence="6">
    <location>
        <begin position="1"/>
        <end position="574"/>
    </location>
</feature>
<feature type="region of interest" description="Disordered" evidence="4">
    <location>
        <begin position="293"/>
        <end position="430"/>
    </location>
</feature>
<feature type="region of interest" description="Disordered" evidence="4">
    <location>
        <begin position="529"/>
        <end position="556"/>
    </location>
</feature>
<feature type="region of interest" description="Disordered" evidence="4">
    <location>
        <begin position="574"/>
        <end position="593"/>
    </location>
</feature>
<feature type="region of interest" description="Disordered" evidence="4">
    <location>
        <begin position="728"/>
        <end position="752"/>
    </location>
</feature>
<feature type="region of interest" description="Disordered" evidence="4">
    <location>
        <begin position="846"/>
        <end position="942"/>
    </location>
</feature>
<feature type="region of interest" description="Disordered" evidence="4">
    <location>
        <begin position="1152"/>
        <end position="1176"/>
    </location>
</feature>
<feature type="region of interest" description="Disordered" evidence="4">
    <location>
        <begin position="1207"/>
        <end position="1258"/>
    </location>
</feature>
<feature type="region of interest" description="Disordered" evidence="4">
    <location>
        <begin position="1277"/>
        <end position="1339"/>
    </location>
</feature>
<feature type="region of interest" description="Disordered" evidence="4">
    <location>
        <begin position="1438"/>
        <end position="1533"/>
    </location>
</feature>
<feature type="region of interest" description="Disordered" evidence="4">
    <location>
        <begin position="1554"/>
        <end position="1605"/>
    </location>
</feature>
<feature type="compositionally biased region" description="Basic and acidic residues" evidence="4">
    <location>
        <begin position="323"/>
        <end position="334"/>
    </location>
</feature>
<feature type="compositionally biased region" description="Low complexity" evidence="4">
    <location>
        <begin position="353"/>
        <end position="365"/>
    </location>
</feature>
<feature type="compositionally biased region" description="Low complexity" evidence="4">
    <location>
        <begin position="420"/>
        <end position="430"/>
    </location>
</feature>
<feature type="compositionally biased region" description="Low complexity" evidence="4">
    <location>
        <begin position="530"/>
        <end position="552"/>
    </location>
</feature>
<feature type="compositionally biased region" description="Polar residues" evidence="4">
    <location>
        <begin position="728"/>
        <end position="745"/>
    </location>
</feature>
<feature type="compositionally biased region" description="Polar residues" evidence="4">
    <location>
        <begin position="846"/>
        <end position="855"/>
    </location>
</feature>
<feature type="compositionally biased region" description="Low complexity" evidence="4">
    <location>
        <begin position="868"/>
        <end position="879"/>
    </location>
</feature>
<feature type="compositionally biased region" description="Basic residues" evidence="4">
    <location>
        <begin position="908"/>
        <end position="917"/>
    </location>
</feature>
<feature type="compositionally biased region" description="Low complexity" evidence="4">
    <location>
        <begin position="928"/>
        <end position="941"/>
    </location>
</feature>
<feature type="compositionally biased region" description="Basic residues" evidence="4">
    <location>
        <begin position="1211"/>
        <end position="1229"/>
    </location>
</feature>
<feature type="compositionally biased region" description="Polar residues" evidence="4">
    <location>
        <begin position="1244"/>
        <end position="1257"/>
    </location>
</feature>
<feature type="compositionally biased region" description="Polar residues" evidence="4">
    <location>
        <begin position="1278"/>
        <end position="1300"/>
    </location>
</feature>
<feature type="compositionally biased region" description="Low complexity" evidence="4">
    <location>
        <begin position="1301"/>
        <end position="1312"/>
    </location>
</feature>
<feature type="compositionally biased region" description="Polar residues" evidence="4">
    <location>
        <begin position="1438"/>
        <end position="1453"/>
    </location>
</feature>
<feature type="compositionally biased region" description="Low complexity" evidence="4">
    <location>
        <begin position="1461"/>
        <end position="1476"/>
    </location>
</feature>
<feature type="compositionally biased region" description="Polar residues" evidence="4">
    <location>
        <begin position="1480"/>
        <end position="1493"/>
    </location>
</feature>
<feature type="compositionally biased region" description="Polar residues" evidence="4">
    <location>
        <begin position="1500"/>
        <end position="1515"/>
    </location>
</feature>
<feature type="compositionally biased region" description="Basic and acidic residues" evidence="4">
    <location>
        <begin position="1558"/>
        <end position="1575"/>
    </location>
</feature>
<feature type="site" description="Arginine finger; crucial for GTP hydrolysis by stabilizing the transition state" evidence="3">
    <location>
        <position position="985"/>
    </location>
</feature>
<feature type="splice variant" id="VSP_036484" description="In isoform b." evidence="8">
    <location>
        <position position="300"/>
    </location>
</feature>
<feature type="mutagenesis site" description="Probably disrupts GTPase-activating activity. Unable to rescue par-6 localization in pac-1 mutant embryos." evidence="5">
    <original>R</original>
    <variation>A</variation>
    <location>
        <position position="985"/>
    </location>
</feature>
<feature type="sequence conflict" description="In Ref. 4; AAA18934." evidence="10" ref="4">
    <original>L</original>
    <variation>I</variation>
    <location>
        <position position="564"/>
    </location>
</feature>
<comment type="function">
    <text evidence="5 6 7">GTPase-activating protein for members of the Rho subfamily including Rac1, RhoA and cdc42 and other Ras-related subfamilies including let-60 (PubMed:18583611, PubMed:8288633). Mediates radial (inner-outer) polarity and gastrulation by excluding par-6 from contacted cell surfaces; acts by inactivating cdc42 at inner cell surfaces which limits active cdc42 to outer cell surfaces devoid of cell-cell contacts, where cdc42 can bind and recruit par-6 (PubMed:18583611, PubMed:25938815, PubMed:8288633). Required for blastomere polarization (PubMed:25938815).</text>
</comment>
<comment type="subunit">
    <text evidence="6">Associated with the catenin-cadherin complex consisting of hmr-1, hmp-1 and hmp-2; this is mediated by interaction with picc-1.</text>
</comment>
<comment type="interaction">
    <interactant intactId="EBI-2918318">
        <id>P34288</id>
    </interactant>
    <interactant intactId="EBI-315998">
        <id>H2KYP0</id>
        <label>picc-1</label>
    </interactant>
    <organismsDiffer>false</organismsDiffer>
    <experiments>4</experiments>
</comment>
<comment type="interaction">
    <interactant intactId="EBI-11465290">
        <id>P34288-2</id>
    </interactant>
    <interactant intactId="EBI-2924098">
        <id>Q9XVU8</id>
        <label>atn-1</label>
    </interactant>
    <organismsDiffer>false</organismsDiffer>
    <experiments>3</experiments>
</comment>
<comment type="interaction">
    <interactant intactId="EBI-11465290">
        <id>P34288-2</id>
    </interactant>
    <interactant intactId="EBI-322249">
        <id>P90900</id>
        <label>ifa-4</label>
    </interactant>
    <organismsDiffer>false</organismsDiffer>
    <experiments>3</experiments>
</comment>
<comment type="interaction">
    <interactant intactId="EBI-11465290">
        <id>P34288-2</id>
    </interactant>
    <interactant intactId="EBI-318782">
        <id>Q9NAN2</id>
        <label>par-6</label>
    </interactant>
    <organismsDiffer>false</organismsDiffer>
    <experiments>3</experiments>
</comment>
<comment type="subcellular location">
    <subcellularLocation>
        <location evidence="1">Cytoplasm</location>
    </subcellularLocation>
    <subcellularLocation>
        <location evidence="5 6">Cell junction</location>
    </subcellularLocation>
    <subcellularLocation>
        <location evidence="6">Cell junction</location>
        <location evidence="6">Adherens junction</location>
    </subcellularLocation>
    <text evidence="5 6">Locates to inner but not outer surfaces of early embryonic somatic (EES) cells (PubMed:18583611). Specifically localizes to cell contacts in hmr-1-dependent and -independent manner in embryos (PubMed:25938815).</text>
</comment>
<comment type="alternative products">
    <event type="alternative splicing"/>
    <isoform>
        <id>P34288-1</id>
        <name evidence="11">a</name>
        <name evidence="9">Long</name>
        <sequence type="displayed"/>
    </isoform>
    <isoform>
        <id>P34288-2</id>
        <name evidence="12">b</name>
        <name evidence="9">Short</name>
        <sequence type="described" ref="VSP_036484"/>
    </isoform>
</comment>
<comment type="developmental stage">
    <text evidence="6">Expressed in four-cell stage embryos.</text>
</comment>
<comment type="disruption phenotype">
    <text evidence="6">RNAi-mediated knockdown of isoform a results in mis-localization of par-6 in embryos.</text>
</comment>